<feature type="signal peptide" evidence="2">
    <location>
        <begin position="1"/>
        <end position="24"/>
    </location>
</feature>
<feature type="chain" id="PRO_0000045152" description="Signaling threshold-regulating transmembrane adapter 1">
    <location>
        <begin position="25"/>
        <end position="196"/>
    </location>
</feature>
<feature type="topological domain" description="Extracellular" evidence="2">
    <location>
        <begin position="25"/>
        <end position="40"/>
    </location>
</feature>
<feature type="transmembrane region" description="Helical" evidence="2">
    <location>
        <begin position="41"/>
        <end position="61"/>
    </location>
</feature>
<feature type="topological domain" description="Cytoplasmic" evidence="2">
    <location>
        <begin position="62"/>
        <end position="196"/>
    </location>
</feature>
<feature type="region of interest" description="Interaction with GRB2" evidence="5">
    <location>
        <begin position="90"/>
        <end position="93"/>
    </location>
</feature>
<feature type="region of interest" description="Disordered" evidence="3">
    <location>
        <begin position="132"/>
        <end position="167"/>
    </location>
</feature>
<feature type="region of interest" description="Interaction with PTPN11">
    <location>
        <begin position="146"/>
        <end position="151"/>
    </location>
</feature>
<feature type="region of interest" description="Interaction with CSK" evidence="5">
    <location>
        <begin position="169"/>
        <end position="172"/>
    </location>
</feature>
<feature type="region of interest" description="Interaction with GRB2" evidence="5">
    <location>
        <begin position="188"/>
        <end position="191"/>
    </location>
</feature>
<feature type="modified residue" description="Phosphoserine" evidence="9">
    <location>
        <position position="80"/>
    </location>
</feature>
<feature type="modified residue" description="Phosphoserine" evidence="1">
    <location>
        <position position="83"/>
    </location>
</feature>
<feature type="modified residue" description="Phosphotyrosine" evidence="5 9">
    <location>
        <position position="90"/>
    </location>
</feature>
<feature type="modified residue" description="Phosphoserine" evidence="10">
    <location>
        <position position="102"/>
    </location>
</feature>
<feature type="modified residue" description="Phosphotyrosine" evidence="8">
    <location>
        <position position="127"/>
    </location>
</feature>
<feature type="modified residue" description="Phosphothreonine" evidence="9 10">
    <location>
        <position position="144"/>
    </location>
</feature>
<feature type="modified residue" description="Phosphotyrosine" evidence="4 5 10">
    <location>
        <position position="148"/>
    </location>
</feature>
<feature type="modified residue" description="Phosphotyrosine" evidence="8">
    <location>
        <position position="169"/>
    </location>
</feature>
<feature type="modified residue" description="Phosphoserine" evidence="9 10">
    <location>
        <position position="182"/>
    </location>
</feature>
<feature type="modified residue" description="Phosphotyrosine" evidence="5 9 10">
    <location>
        <position position="188"/>
    </location>
</feature>
<feature type="glycosylation site" description="N-linked (GlcNAc...) asparagine" evidence="4">
    <location>
        <position position="26"/>
    </location>
</feature>
<feature type="disulfide bond" description="Interchain" evidence="7">
    <location>
        <position position="27"/>
    </location>
</feature>
<feature type="mutagenesis site" description="Abolishes glycosylation." evidence="4">
    <original>N</original>
    <variation>Q</variation>
    <location>
        <position position="26"/>
    </location>
</feature>
<feature type="mutagenesis site" description="Reduces interaction with GRB2. Abolishes interaction with GRB2; when associated with F-188." evidence="5">
    <original>Y</original>
    <variation>F</variation>
    <location>
        <position position="90"/>
    </location>
</feature>
<feature type="mutagenesis site" description="No effect on interaction with PTPN11 or GRB2." evidence="5">
    <original>Y</original>
    <variation>F</variation>
    <location>
        <position position="127"/>
    </location>
</feature>
<feature type="mutagenesis site" description="Reduces interaction with PTPN11, no effect on inhibition of NF-AT activation." evidence="4 5">
    <original>Y</original>
    <variation>F</variation>
    <location>
        <position position="148"/>
    </location>
</feature>
<feature type="mutagenesis site" description="Abolishes interaction with CSK and impairs inhibition of NF-AT activation." evidence="5">
    <original>Y</original>
    <variation>F</variation>
    <location>
        <position position="169"/>
    </location>
</feature>
<feature type="mutagenesis site" description="Reduces interaction with GRB2. Abolishes interaction with GRB2; when associated with F-90." evidence="5">
    <original>Y</original>
    <variation>F</variation>
    <location>
        <position position="188"/>
    </location>
</feature>
<sequence>MNQADPRLRAVCLWTLTSAAMSRGDNCTDLLALGIPSITQAWGLWVLLGAVTLLFLISLAAHLSQWTRGRSRSHPGQGRSGESVEEVPLYGNLHYLQTGRLSQDPEPDQQDPTLGGPARAAEEVMCYTSLQLRPPQGRIPGPGTPVKYSEVVLDSEPKSQASGPEPELYASVCAQTRRARASFPDQAYANSQPAAS</sequence>
<evidence type="ECO:0000250" key="1">
    <source>
        <dbReference type="UniProtKB" id="Q5M869"/>
    </source>
</evidence>
<evidence type="ECO:0000255" key="2"/>
<evidence type="ECO:0000256" key="3">
    <source>
        <dbReference type="SAM" id="MobiDB-lite"/>
    </source>
</evidence>
<evidence type="ECO:0000269" key="4">
    <source>
    </source>
</evidence>
<evidence type="ECO:0000269" key="5">
    <source>
    </source>
</evidence>
<evidence type="ECO:0000269" key="6">
    <source>
    </source>
</evidence>
<evidence type="ECO:0000305" key="7"/>
<evidence type="ECO:0000305" key="8">
    <source>
    </source>
</evidence>
<evidence type="ECO:0007744" key="9">
    <source>
    </source>
</evidence>
<evidence type="ECO:0007744" key="10">
    <source>
    </source>
</evidence>
<name>SIT1_HUMAN</name>
<accession>Q9Y3P8</accession>
<accession>B2RBP9</accession>
<gene>
    <name type="primary">SIT1</name>
    <name type="synonym">SIT</name>
</gene>
<dbReference type="EMBL" id="AJ010059">
    <property type="protein sequence ID" value="CAB41504.1"/>
    <property type="molecule type" value="mRNA"/>
</dbReference>
<dbReference type="EMBL" id="AJ271888">
    <property type="protein sequence ID" value="CAC81313.1"/>
    <property type="molecule type" value="Genomic_DNA"/>
</dbReference>
<dbReference type="EMBL" id="AK314758">
    <property type="protein sequence ID" value="BAG37296.1"/>
    <property type="molecule type" value="mRNA"/>
</dbReference>
<dbReference type="EMBL" id="AL357874">
    <property type="status" value="NOT_ANNOTATED_CDS"/>
    <property type="molecule type" value="Genomic_DNA"/>
</dbReference>
<dbReference type="EMBL" id="CH471071">
    <property type="protein sequence ID" value="EAW58370.1"/>
    <property type="molecule type" value="Genomic_DNA"/>
</dbReference>
<dbReference type="EMBL" id="BC102029">
    <property type="protein sequence ID" value="AAI02030.1"/>
    <property type="molecule type" value="mRNA"/>
</dbReference>
<dbReference type="EMBL" id="BC104491">
    <property type="protein sequence ID" value="AAI04492.1"/>
    <property type="molecule type" value="mRNA"/>
</dbReference>
<dbReference type="EMBL" id="BC107484">
    <property type="protein sequence ID" value="AAI07485.1"/>
    <property type="molecule type" value="mRNA"/>
</dbReference>
<dbReference type="CCDS" id="CCDS6582.1"/>
<dbReference type="RefSeq" id="NP_055265.1">
    <property type="nucleotide sequence ID" value="NM_014450.3"/>
</dbReference>
<dbReference type="BioGRID" id="118088">
    <property type="interactions" value="18"/>
</dbReference>
<dbReference type="FunCoup" id="Q9Y3P8">
    <property type="interactions" value="86"/>
</dbReference>
<dbReference type="IntAct" id="Q9Y3P8">
    <property type="interactions" value="11"/>
</dbReference>
<dbReference type="MINT" id="Q9Y3P8"/>
<dbReference type="STRING" id="9606.ENSP00000259608"/>
<dbReference type="GlyCosmos" id="Q9Y3P8">
    <property type="glycosylation" value="1 site, No reported glycans"/>
</dbReference>
<dbReference type="GlyGen" id="Q9Y3P8">
    <property type="glycosylation" value="2 sites, 1 O-linked glycan (1 site)"/>
</dbReference>
<dbReference type="iPTMnet" id="Q9Y3P8"/>
<dbReference type="PhosphoSitePlus" id="Q9Y3P8"/>
<dbReference type="BioMuta" id="SIT1"/>
<dbReference type="DMDM" id="74753488"/>
<dbReference type="jPOST" id="Q9Y3P8"/>
<dbReference type="MassIVE" id="Q9Y3P8"/>
<dbReference type="PaxDb" id="9606-ENSP00000259608"/>
<dbReference type="PeptideAtlas" id="Q9Y3P8"/>
<dbReference type="ProteomicsDB" id="86053"/>
<dbReference type="Antibodypedia" id="11587">
    <property type="antibodies" value="210 antibodies from 27 providers"/>
</dbReference>
<dbReference type="DNASU" id="27240"/>
<dbReference type="Ensembl" id="ENST00000259608.8">
    <property type="protein sequence ID" value="ENSP00000259608.3"/>
    <property type="gene ID" value="ENSG00000137078.10"/>
</dbReference>
<dbReference type="GeneID" id="27240"/>
<dbReference type="KEGG" id="hsa:27240"/>
<dbReference type="MANE-Select" id="ENST00000259608.8">
    <property type="protein sequence ID" value="ENSP00000259608.3"/>
    <property type="RefSeq nucleotide sequence ID" value="NM_014450.3"/>
    <property type="RefSeq protein sequence ID" value="NP_055265.1"/>
</dbReference>
<dbReference type="UCSC" id="uc003zxe.3">
    <property type="organism name" value="human"/>
</dbReference>
<dbReference type="AGR" id="HGNC:17710"/>
<dbReference type="CTD" id="27240"/>
<dbReference type="DisGeNET" id="27240"/>
<dbReference type="GeneCards" id="SIT1"/>
<dbReference type="HGNC" id="HGNC:17710">
    <property type="gene designation" value="SIT1"/>
</dbReference>
<dbReference type="HPA" id="ENSG00000137078">
    <property type="expression patterns" value="Tissue enriched (lymphoid)"/>
</dbReference>
<dbReference type="MIM" id="604964">
    <property type="type" value="gene"/>
</dbReference>
<dbReference type="neXtProt" id="NX_Q9Y3P8"/>
<dbReference type="OpenTargets" id="ENSG00000137078"/>
<dbReference type="PharmGKB" id="PA142670914"/>
<dbReference type="VEuPathDB" id="HostDB:ENSG00000137078"/>
<dbReference type="eggNOG" id="ENOG502S87Q">
    <property type="taxonomic scope" value="Eukaryota"/>
</dbReference>
<dbReference type="GeneTree" id="ENSGT00390000016476"/>
<dbReference type="HOGENOM" id="CLU_111407_0_0_1"/>
<dbReference type="InParanoid" id="Q9Y3P8"/>
<dbReference type="OrthoDB" id="9414978at2759"/>
<dbReference type="PAN-GO" id="Q9Y3P8">
    <property type="GO annotations" value="3 GO annotations based on evolutionary models"/>
</dbReference>
<dbReference type="PhylomeDB" id="Q9Y3P8"/>
<dbReference type="TreeFam" id="TF337816"/>
<dbReference type="PathwayCommons" id="Q9Y3P8"/>
<dbReference type="SignaLink" id="Q9Y3P8"/>
<dbReference type="BioGRID-ORCS" id="27240">
    <property type="hits" value="11 hits in 1152 CRISPR screens"/>
</dbReference>
<dbReference type="ChiTaRS" id="SIT1">
    <property type="organism name" value="human"/>
</dbReference>
<dbReference type="GeneWiki" id="SIT1"/>
<dbReference type="GenomeRNAi" id="27240"/>
<dbReference type="Pharos" id="Q9Y3P8">
    <property type="development level" value="Tbio"/>
</dbReference>
<dbReference type="PRO" id="PR:Q9Y3P8"/>
<dbReference type="Proteomes" id="UP000005640">
    <property type="component" value="Chromosome 9"/>
</dbReference>
<dbReference type="RNAct" id="Q9Y3P8">
    <property type="molecule type" value="protein"/>
</dbReference>
<dbReference type="Bgee" id="ENSG00000137078">
    <property type="expression patterns" value="Expressed in granulocyte and 127 other cell types or tissues"/>
</dbReference>
<dbReference type="ExpressionAtlas" id="Q9Y3P8">
    <property type="expression patterns" value="baseline and differential"/>
</dbReference>
<dbReference type="GO" id="GO:0070062">
    <property type="term" value="C:extracellular exosome"/>
    <property type="evidence" value="ECO:0007005"/>
    <property type="project" value="UniProtKB"/>
</dbReference>
<dbReference type="GO" id="GO:0005886">
    <property type="term" value="C:plasma membrane"/>
    <property type="evidence" value="ECO:0000314"/>
    <property type="project" value="UniProtKB"/>
</dbReference>
<dbReference type="GO" id="GO:0019900">
    <property type="term" value="F:kinase binding"/>
    <property type="evidence" value="ECO:0000353"/>
    <property type="project" value="UniProtKB"/>
</dbReference>
<dbReference type="GO" id="GO:0042169">
    <property type="term" value="F:SH2 domain binding"/>
    <property type="evidence" value="ECO:0000304"/>
    <property type="project" value="HGNC-UCL"/>
</dbReference>
<dbReference type="GO" id="GO:0002250">
    <property type="term" value="P:adaptive immune response"/>
    <property type="evidence" value="ECO:0007669"/>
    <property type="project" value="UniProtKB-KW"/>
</dbReference>
<dbReference type="GO" id="GO:0050863">
    <property type="term" value="P:regulation of T cell activation"/>
    <property type="evidence" value="ECO:0000314"/>
    <property type="project" value="UniProtKB"/>
</dbReference>
<dbReference type="GO" id="GO:0007165">
    <property type="term" value="P:signal transduction"/>
    <property type="evidence" value="ECO:0000304"/>
    <property type="project" value="ProtInc"/>
</dbReference>
<dbReference type="GO" id="GO:0043029">
    <property type="term" value="P:T cell homeostasis"/>
    <property type="evidence" value="ECO:0007669"/>
    <property type="project" value="InterPro"/>
</dbReference>
<dbReference type="InterPro" id="IPR033269">
    <property type="entry name" value="Sit1"/>
</dbReference>
<dbReference type="PANTHER" id="PTHR15604">
    <property type="entry name" value="SIGNALING THRESHOLD-REGULATING TRANSMEMBRANE ADAPTER 1"/>
    <property type="match status" value="1"/>
</dbReference>
<dbReference type="PANTHER" id="PTHR15604:SF0">
    <property type="entry name" value="SIGNALING THRESHOLD-REGULATING TRANSMEMBRANE ADAPTER 1"/>
    <property type="match status" value="1"/>
</dbReference>
<protein>
    <recommendedName>
        <fullName>Signaling threshold-regulating transmembrane adapter 1</fullName>
    </recommendedName>
    <alternativeName>
        <fullName>SHP2-interacting transmembrane adapter protein</fullName>
    </alternativeName>
    <alternativeName>
        <fullName>Suppression-inducing transmembrane adapter 1</fullName>
    </alternativeName>
    <alternativeName>
        <fullName>gp30/40</fullName>
    </alternativeName>
</protein>
<proteinExistence type="evidence at protein level"/>
<keyword id="KW-1064">Adaptive immunity</keyword>
<keyword id="KW-1003">Cell membrane</keyword>
<keyword id="KW-0903">Direct protein sequencing</keyword>
<keyword id="KW-1015">Disulfide bond</keyword>
<keyword id="KW-0325">Glycoprotein</keyword>
<keyword id="KW-0391">Immunity</keyword>
<keyword id="KW-0472">Membrane</keyword>
<keyword id="KW-0597">Phosphoprotein</keyword>
<keyword id="KW-1267">Proteomics identification</keyword>
<keyword id="KW-1185">Reference proteome</keyword>
<keyword id="KW-0732">Signal</keyword>
<keyword id="KW-0812">Transmembrane</keyword>
<keyword id="KW-1133">Transmembrane helix</keyword>
<organism>
    <name type="scientific">Homo sapiens</name>
    <name type="common">Human</name>
    <dbReference type="NCBI Taxonomy" id="9606"/>
    <lineage>
        <taxon>Eukaryota</taxon>
        <taxon>Metazoa</taxon>
        <taxon>Chordata</taxon>
        <taxon>Craniata</taxon>
        <taxon>Vertebrata</taxon>
        <taxon>Euteleostomi</taxon>
        <taxon>Mammalia</taxon>
        <taxon>Eutheria</taxon>
        <taxon>Euarchontoglires</taxon>
        <taxon>Primates</taxon>
        <taxon>Haplorrhini</taxon>
        <taxon>Catarrhini</taxon>
        <taxon>Hominidae</taxon>
        <taxon>Homo</taxon>
    </lineage>
</organism>
<comment type="function">
    <text evidence="4">Negatively regulates TCR (T-cell antigen receptor)-mediated signaling in T-cells. Involved in positive selection of T-cells.</text>
</comment>
<comment type="subunit">
    <text evidence="4 5">Homodimer; disulfide-linked. When phosphorylated, interacts with PTPN11/SHP2, GRB2 and CSK.</text>
</comment>
<comment type="interaction">
    <interactant intactId="EBI-6977215">
        <id>Q9Y3P8</id>
    </interactant>
    <interactant intactId="EBI-4290634">
        <id>Q9BQE5</id>
        <label>APOL2</label>
    </interactant>
    <organismsDiffer>false</organismsDiffer>
    <experiments>3</experiments>
</comment>
<comment type="interaction">
    <interactant intactId="EBI-6977215">
        <id>Q9Y3P8</id>
    </interactant>
    <interactant intactId="EBI-3922513">
        <id>O95393</id>
        <label>BMP10</label>
    </interactant>
    <organismsDiffer>false</organismsDiffer>
    <experiments>3</experiments>
</comment>
<comment type="interaction">
    <interactant intactId="EBI-6977215">
        <id>Q9Y3P8</id>
    </interactant>
    <interactant intactId="EBI-12813623">
        <id>A0PK11</id>
        <label>CLRN2</label>
    </interactant>
    <organismsDiffer>false</organismsDiffer>
    <experiments>3</experiments>
</comment>
<comment type="interaction">
    <interactant intactId="EBI-6977215">
        <id>Q9Y3P8</id>
    </interactant>
    <interactant intactId="EBI-2431769">
        <id>O43736</id>
        <label>ITM2A</label>
    </interactant>
    <organismsDiffer>false</organismsDiffer>
    <experiments>3</experiments>
</comment>
<comment type="interaction">
    <interactant intactId="EBI-6977215">
        <id>Q9Y3P8</id>
    </interactant>
    <interactant intactId="EBI-750078">
        <id>Q13021</id>
        <label>MALL</label>
    </interactant>
    <organismsDiffer>false</organismsDiffer>
    <experiments>3</experiments>
</comment>
<comment type="interaction">
    <interactant intactId="EBI-6977215">
        <id>Q9Y3P8</id>
    </interactant>
    <interactant intactId="EBI-692836">
        <id>P26678</id>
        <label>PLN</label>
    </interactant>
    <organismsDiffer>false</organismsDiffer>
    <experiments>3</experiments>
</comment>
<comment type="interaction">
    <interactant intactId="EBI-6977215">
        <id>Q9Y3P8</id>
    </interactant>
    <interactant intactId="EBI-1045825">
        <id>P55061</id>
        <label>TMBIM6</label>
    </interactant>
    <organismsDiffer>false</organismsDiffer>
    <experiments>3</experiments>
</comment>
<comment type="interaction">
    <interactant intactId="EBI-6977215">
        <id>Q9Y3P8</id>
    </interactant>
    <interactant intactId="EBI-2844246">
        <id>Q9NV12</id>
        <label>TMEM140</label>
    </interactant>
    <organismsDiffer>false</organismsDiffer>
    <experiments>3</experiments>
</comment>
<comment type="interaction">
    <interactant intactId="EBI-6977215">
        <id>Q9Y3P8</id>
    </interactant>
    <interactant intactId="EBI-12045841">
        <id>Q86UF1</id>
        <label>TSPAN33</label>
    </interactant>
    <organismsDiffer>false</organismsDiffer>
    <experiments>3</experiments>
</comment>
<comment type="interaction">
    <interactant intactId="EBI-6977215">
        <id>Q9Y3P8</id>
    </interactant>
    <interactant intactId="EBI-12237619">
        <id>O75841</id>
        <label>UPK1B</label>
    </interactant>
    <organismsDiffer>false</organismsDiffer>
    <experiments>3</experiments>
</comment>
<comment type="subcellular location">
    <subcellularLocation>
        <location evidence="4">Cell membrane</location>
        <topology evidence="4">Single-pass type I membrane protein</topology>
    </subcellularLocation>
</comment>
<comment type="tissue specificity">
    <text evidence="4 6">Specifically expressed in T- and B-cells. Present in plasma cells but not in germinal center B-cells (at protein level). Expressed in T- and B-cell lymphoma.</text>
</comment>
<comment type="PTM">
    <text evidence="4 5">Phosphorylated on tyrosines by LCK, FYN or ZAP70 upon TCR activation; which leads to the recruitment of PTPN11, GRB2 and CSK.</text>
</comment>
<comment type="caution">
    <text evidence="7">In contrast to its orthologs it harbors a signal sequence.</text>
</comment>
<reference key="1">
    <citation type="journal article" date="1999" name="J. Exp. Med.">
        <title>SHP2-interacting transmembrane adaptor protein (SIT), a novel disulfide-linked dimer regulating human T-cell activation.</title>
        <authorList>
            <person name="Marie-Cardine A."/>
            <person name="Kirchgessner H."/>
            <person name="Bruyns E."/>
            <person name="Shevchenko A."/>
            <person name="Mann M."/>
            <person name="Autschbach F."/>
            <person name="Ratnofsky S."/>
            <person name="Meuer S."/>
            <person name="Schraven B."/>
        </authorList>
    </citation>
    <scope>NUCLEOTIDE SEQUENCE [MRNA]</scope>
    <scope>PROTEIN SEQUENCE OF 148-158</scope>
    <scope>IDENTIFICATION BY MASS SPECTROMETRY</scope>
    <scope>DIMERIZATION</scope>
    <scope>GLYCOSYLATION AT ASN-26</scope>
    <scope>PHOSPHORYLATION AT TYR-148</scope>
    <scope>MUTAGENESIS OF ASN-26 AND TYR-148</scope>
    <scope>TISSUE SPECIFICITY</scope>
    <scope>SUBCELLULAR LOCATION</scope>
    <scope>INTERACTION WITH PTPN11</scope>
    <scope>FUNCTION</scope>
</reference>
<reference key="2">
    <citation type="journal article" date="2001" name="Immunogenetics">
        <title>Complete sequence, genomic organization, and chromosomal localization of the human gene encoding the SHP2-interacting transmembrane adaptor protein (SIT).</title>
        <authorList>
            <person name="Huebener C."/>
            <person name="Mincheva A."/>
            <person name="Lichter P."/>
            <person name="Schraven B."/>
            <person name="Bruyns E."/>
        </authorList>
    </citation>
    <scope>NUCLEOTIDE SEQUENCE [GENOMIC DNA]</scope>
</reference>
<reference key="3">
    <citation type="journal article" date="2004" name="Nat. Genet.">
        <title>Complete sequencing and characterization of 21,243 full-length human cDNAs.</title>
        <authorList>
            <person name="Ota T."/>
            <person name="Suzuki Y."/>
            <person name="Nishikawa T."/>
            <person name="Otsuki T."/>
            <person name="Sugiyama T."/>
            <person name="Irie R."/>
            <person name="Wakamatsu A."/>
            <person name="Hayashi K."/>
            <person name="Sato H."/>
            <person name="Nagai K."/>
            <person name="Kimura K."/>
            <person name="Makita H."/>
            <person name="Sekine M."/>
            <person name="Obayashi M."/>
            <person name="Nishi T."/>
            <person name="Shibahara T."/>
            <person name="Tanaka T."/>
            <person name="Ishii S."/>
            <person name="Yamamoto J."/>
            <person name="Saito K."/>
            <person name="Kawai Y."/>
            <person name="Isono Y."/>
            <person name="Nakamura Y."/>
            <person name="Nagahari K."/>
            <person name="Murakami K."/>
            <person name="Yasuda T."/>
            <person name="Iwayanagi T."/>
            <person name="Wagatsuma M."/>
            <person name="Shiratori A."/>
            <person name="Sudo H."/>
            <person name="Hosoiri T."/>
            <person name="Kaku Y."/>
            <person name="Kodaira H."/>
            <person name="Kondo H."/>
            <person name="Sugawara M."/>
            <person name="Takahashi M."/>
            <person name="Kanda K."/>
            <person name="Yokoi T."/>
            <person name="Furuya T."/>
            <person name="Kikkawa E."/>
            <person name="Omura Y."/>
            <person name="Abe K."/>
            <person name="Kamihara K."/>
            <person name="Katsuta N."/>
            <person name="Sato K."/>
            <person name="Tanikawa M."/>
            <person name="Yamazaki M."/>
            <person name="Ninomiya K."/>
            <person name="Ishibashi T."/>
            <person name="Yamashita H."/>
            <person name="Murakawa K."/>
            <person name="Fujimori K."/>
            <person name="Tanai H."/>
            <person name="Kimata M."/>
            <person name="Watanabe M."/>
            <person name="Hiraoka S."/>
            <person name="Chiba Y."/>
            <person name="Ishida S."/>
            <person name="Ono Y."/>
            <person name="Takiguchi S."/>
            <person name="Watanabe S."/>
            <person name="Yosida M."/>
            <person name="Hotuta T."/>
            <person name="Kusano J."/>
            <person name="Kanehori K."/>
            <person name="Takahashi-Fujii A."/>
            <person name="Hara H."/>
            <person name="Tanase T.-O."/>
            <person name="Nomura Y."/>
            <person name="Togiya S."/>
            <person name="Komai F."/>
            <person name="Hara R."/>
            <person name="Takeuchi K."/>
            <person name="Arita M."/>
            <person name="Imose N."/>
            <person name="Musashino K."/>
            <person name="Yuuki H."/>
            <person name="Oshima A."/>
            <person name="Sasaki N."/>
            <person name="Aotsuka S."/>
            <person name="Yoshikawa Y."/>
            <person name="Matsunawa H."/>
            <person name="Ichihara T."/>
            <person name="Shiohata N."/>
            <person name="Sano S."/>
            <person name="Moriya S."/>
            <person name="Momiyama H."/>
            <person name="Satoh N."/>
            <person name="Takami S."/>
            <person name="Terashima Y."/>
            <person name="Suzuki O."/>
            <person name="Nakagawa S."/>
            <person name="Senoh A."/>
            <person name="Mizoguchi H."/>
            <person name="Goto Y."/>
            <person name="Shimizu F."/>
            <person name="Wakebe H."/>
            <person name="Hishigaki H."/>
            <person name="Watanabe T."/>
            <person name="Sugiyama A."/>
            <person name="Takemoto M."/>
            <person name="Kawakami B."/>
            <person name="Yamazaki M."/>
            <person name="Watanabe K."/>
            <person name="Kumagai A."/>
            <person name="Itakura S."/>
            <person name="Fukuzumi Y."/>
            <person name="Fujimori Y."/>
            <person name="Komiyama M."/>
            <person name="Tashiro H."/>
            <person name="Tanigami A."/>
            <person name="Fujiwara T."/>
            <person name="Ono T."/>
            <person name="Yamada K."/>
            <person name="Fujii Y."/>
            <person name="Ozaki K."/>
            <person name="Hirao M."/>
            <person name="Ohmori Y."/>
            <person name="Kawabata A."/>
            <person name="Hikiji T."/>
            <person name="Kobatake N."/>
            <person name="Inagaki H."/>
            <person name="Ikema Y."/>
            <person name="Okamoto S."/>
            <person name="Okitani R."/>
            <person name="Kawakami T."/>
            <person name="Noguchi S."/>
            <person name="Itoh T."/>
            <person name="Shigeta K."/>
            <person name="Senba T."/>
            <person name="Matsumura K."/>
            <person name="Nakajima Y."/>
            <person name="Mizuno T."/>
            <person name="Morinaga M."/>
            <person name="Sasaki M."/>
            <person name="Togashi T."/>
            <person name="Oyama M."/>
            <person name="Hata H."/>
            <person name="Watanabe M."/>
            <person name="Komatsu T."/>
            <person name="Mizushima-Sugano J."/>
            <person name="Satoh T."/>
            <person name="Shirai Y."/>
            <person name="Takahashi Y."/>
            <person name="Nakagawa K."/>
            <person name="Okumura K."/>
            <person name="Nagase T."/>
            <person name="Nomura N."/>
            <person name="Kikuchi H."/>
            <person name="Masuho Y."/>
            <person name="Yamashita R."/>
            <person name="Nakai K."/>
            <person name="Yada T."/>
            <person name="Nakamura Y."/>
            <person name="Ohara O."/>
            <person name="Isogai T."/>
            <person name="Sugano S."/>
        </authorList>
    </citation>
    <scope>NUCLEOTIDE SEQUENCE [LARGE SCALE MRNA]</scope>
    <source>
        <tissue>Thymus</tissue>
    </source>
</reference>
<reference key="4">
    <citation type="journal article" date="2004" name="Nature">
        <title>DNA sequence and analysis of human chromosome 9.</title>
        <authorList>
            <person name="Humphray S.J."/>
            <person name="Oliver K."/>
            <person name="Hunt A.R."/>
            <person name="Plumb R.W."/>
            <person name="Loveland J.E."/>
            <person name="Howe K.L."/>
            <person name="Andrews T.D."/>
            <person name="Searle S."/>
            <person name="Hunt S.E."/>
            <person name="Scott C.E."/>
            <person name="Jones M.C."/>
            <person name="Ainscough R."/>
            <person name="Almeida J.P."/>
            <person name="Ambrose K.D."/>
            <person name="Ashwell R.I.S."/>
            <person name="Babbage A.K."/>
            <person name="Babbage S."/>
            <person name="Bagguley C.L."/>
            <person name="Bailey J."/>
            <person name="Banerjee R."/>
            <person name="Barker D.J."/>
            <person name="Barlow K.F."/>
            <person name="Bates K."/>
            <person name="Beasley H."/>
            <person name="Beasley O."/>
            <person name="Bird C.P."/>
            <person name="Bray-Allen S."/>
            <person name="Brown A.J."/>
            <person name="Brown J.Y."/>
            <person name="Burford D."/>
            <person name="Burrill W."/>
            <person name="Burton J."/>
            <person name="Carder C."/>
            <person name="Carter N.P."/>
            <person name="Chapman J.C."/>
            <person name="Chen Y."/>
            <person name="Clarke G."/>
            <person name="Clark S.Y."/>
            <person name="Clee C.M."/>
            <person name="Clegg S."/>
            <person name="Collier R.E."/>
            <person name="Corby N."/>
            <person name="Crosier M."/>
            <person name="Cummings A.T."/>
            <person name="Davies J."/>
            <person name="Dhami P."/>
            <person name="Dunn M."/>
            <person name="Dutta I."/>
            <person name="Dyer L.W."/>
            <person name="Earthrowl M.E."/>
            <person name="Faulkner L."/>
            <person name="Fleming C.J."/>
            <person name="Frankish A."/>
            <person name="Frankland J.A."/>
            <person name="French L."/>
            <person name="Fricker D.G."/>
            <person name="Garner P."/>
            <person name="Garnett J."/>
            <person name="Ghori J."/>
            <person name="Gilbert J.G.R."/>
            <person name="Glison C."/>
            <person name="Grafham D.V."/>
            <person name="Gribble S."/>
            <person name="Griffiths C."/>
            <person name="Griffiths-Jones S."/>
            <person name="Grocock R."/>
            <person name="Guy J."/>
            <person name="Hall R.E."/>
            <person name="Hammond S."/>
            <person name="Harley J.L."/>
            <person name="Harrison E.S.I."/>
            <person name="Hart E.A."/>
            <person name="Heath P.D."/>
            <person name="Henderson C.D."/>
            <person name="Hopkins B.L."/>
            <person name="Howard P.J."/>
            <person name="Howden P.J."/>
            <person name="Huckle E."/>
            <person name="Johnson C."/>
            <person name="Johnson D."/>
            <person name="Joy A.A."/>
            <person name="Kay M."/>
            <person name="Keenan S."/>
            <person name="Kershaw J.K."/>
            <person name="Kimberley A.M."/>
            <person name="King A."/>
            <person name="Knights A."/>
            <person name="Laird G.K."/>
            <person name="Langford C."/>
            <person name="Lawlor S."/>
            <person name="Leongamornlert D.A."/>
            <person name="Leversha M."/>
            <person name="Lloyd C."/>
            <person name="Lloyd D.M."/>
            <person name="Lovell J."/>
            <person name="Martin S."/>
            <person name="Mashreghi-Mohammadi M."/>
            <person name="Matthews L."/>
            <person name="McLaren S."/>
            <person name="McLay K.E."/>
            <person name="McMurray A."/>
            <person name="Milne S."/>
            <person name="Nickerson T."/>
            <person name="Nisbett J."/>
            <person name="Nordsiek G."/>
            <person name="Pearce A.V."/>
            <person name="Peck A.I."/>
            <person name="Porter K.M."/>
            <person name="Pandian R."/>
            <person name="Pelan S."/>
            <person name="Phillimore B."/>
            <person name="Povey S."/>
            <person name="Ramsey Y."/>
            <person name="Rand V."/>
            <person name="Scharfe M."/>
            <person name="Sehra H.K."/>
            <person name="Shownkeen R."/>
            <person name="Sims S.K."/>
            <person name="Skuce C.D."/>
            <person name="Smith M."/>
            <person name="Steward C.A."/>
            <person name="Swarbreck D."/>
            <person name="Sycamore N."/>
            <person name="Tester J."/>
            <person name="Thorpe A."/>
            <person name="Tracey A."/>
            <person name="Tromans A."/>
            <person name="Thomas D.W."/>
            <person name="Wall M."/>
            <person name="Wallis J.M."/>
            <person name="West A.P."/>
            <person name="Whitehead S.L."/>
            <person name="Willey D.L."/>
            <person name="Williams S.A."/>
            <person name="Wilming L."/>
            <person name="Wray P.W."/>
            <person name="Young L."/>
            <person name="Ashurst J.L."/>
            <person name="Coulson A."/>
            <person name="Blocker H."/>
            <person name="Durbin R.M."/>
            <person name="Sulston J.E."/>
            <person name="Hubbard T."/>
            <person name="Jackson M.J."/>
            <person name="Bentley D.R."/>
            <person name="Beck S."/>
            <person name="Rogers J."/>
            <person name="Dunham I."/>
        </authorList>
    </citation>
    <scope>NUCLEOTIDE SEQUENCE [LARGE SCALE GENOMIC DNA]</scope>
</reference>
<reference key="5">
    <citation type="submission" date="2005-09" db="EMBL/GenBank/DDBJ databases">
        <authorList>
            <person name="Mural R.J."/>
            <person name="Istrail S."/>
            <person name="Sutton G.G."/>
            <person name="Florea L."/>
            <person name="Halpern A.L."/>
            <person name="Mobarry C.M."/>
            <person name="Lippert R."/>
            <person name="Walenz B."/>
            <person name="Shatkay H."/>
            <person name="Dew I."/>
            <person name="Miller J.R."/>
            <person name="Flanigan M.J."/>
            <person name="Edwards N.J."/>
            <person name="Bolanos R."/>
            <person name="Fasulo D."/>
            <person name="Halldorsson B.V."/>
            <person name="Hannenhalli S."/>
            <person name="Turner R."/>
            <person name="Yooseph S."/>
            <person name="Lu F."/>
            <person name="Nusskern D.R."/>
            <person name="Shue B.C."/>
            <person name="Zheng X.H."/>
            <person name="Zhong F."/>
            <person name="Delcher A.L."/>
            <person name="Huson D.H."/>
            <person name="Kravitz S.A."/>
            <person name="Mouchard L."/>
            <person name="Reinert K."/>
            <person name="Remington K.A."/>
            <person name="Clark A.G."/>
            <person name="Waterman M.S."/>
            <person name="Eichler E.E."/>
            <person name="Adams M.D."/>
            <person name="Hunkapiller M.W."/>
            <person name="Myers E.W."/>
            <person name="Venter J.C."/>
        </authorList>
    </citation>
    <scope>NUCLEOTIDE SEQUENCE [LARGE SCALE GENOMIC DNA]</scope>
</reference>
<reference key="6">
    <citation type="journal article" date="2004" name="Genome Res.">
        <title>The status, quality, and expansion of the NIH full-length cDNA project: the Mammalian Gene Collection (MGC).</title>
        <authorList>
            <consortium name="The MGC Project Team"/>
        </authorList>
    </citation>
    <scope>NUCLEOTIDE SEQUENCE [LARGE SCALE MRNA]</scope>
</reference>
<reference key="7">
    <citation type="journal article" date="2001" name="Eur. J. Immunol.">
        <title>Structural and functional dissection of the cytoplasmic domain of the transmembrane adaptor protein SIT (SHP2-interacting transmembrane adaptor protein).</title>
        <authorList>
            <person name="Pfrepper K.-I."/>
            <person name="Marie-Cardine A."/>
            <person name="Simeoni L."/>
            <person name="Kuramitsu Y."/>
            <person name="Leo A."/>
            <person name="Spicka J."/>
            <person name="Hilgert I."/>
            <person name="Scherer J."/>
            <person name="Schraven B."/>
        </authorList>
    </citation>
    <scope>MUTAGENESIS OF TYR-90; TYR-127; TYR-148; TYR-169 AND TYR-188</scope>
    <scope>PHOSPHORYLATION AT TYR-90; TYR-127; TYR-148; TYR-169 AND TYR-188</scope>
    <scope>INTERACTION WITH PTPN11; GRB2 AND CSK</scope>
</reference>
<reference key="8">
    <citation type="journal article" date="2004" name="Anal. Chem.">
        <title>Robust phosphoproteomic profiling of tyrosine phosphorylation sites from human T cells using immobilized metal affinity chromatography and tandem mass spectrometry.</title>
        <authorList>
            <person name="Brill L.M."/>
            <person name="Salomon A.R."/>
            <person name="Ficarro S.B."/>
            <person name="Mukherji M."/>
            <person name="Stettler-Gill M."/>
            <person name="Peters E.C."/>
        </authorList>
    </citation>
    <scope>PHOSPHORYLATION [LARGE SCALE ANALYSIS] AT SER-80; TYR-90; THR-144; SER-182 AND TYR-188</scope>
    <scope>IDENTIFICATION BY MASS SPECTROMETRY [LARGE SCALE ANALYSIS]</scope>
    <source>
        <tissue>Leukemic T-cell</tissue>
    </source>
</reference>
<reference key="9">
    <citation type="journal article" date="2006" name="Blood">
        <title>Transmembrane adaptor molecules: a new category of lymphoid-cell markers.</title>
        <authorList>
            <person name="Tedoldi S."/>
            <person name="Paterson J.C."/>
            <person name="Hansmann M.-L."/>
            <person name="Natkunam Y."/>
            <person name="Rudiger T."/>
            <person name="Angelisova P."/>
            <person name="Du M.Q."/>
            <person name="Roberton H."/>
            <person name="Roncador G."/>
            <person name="Sanchez L."/>
            <person name="Pozzobon M."/>
            <person name="Masir N."/>
            <person name="Barry R."/>
            <person name="Pileri S."/>
            <person name="Mason D.Y."/>
            <person name="Marafioti T."/>
            <person name="Horejsi V."/>
        </authorList>
    </citation>
    <scope>TISSUE SPECIFICITY</scope>
</reference>
<reference key="10">
    <citation type="journal article" date="2009" name="Sci. Signal.">
        <title>Quantitative phosphoproteomic analysis of T cell receptor signaling reveals system-wide modulation of protein-protein interactions.</title>
        <authorList>
            <person name="Mayya V."/>
            <person name="Lundgren D.H."/>
            <person name="Hwang S.-I."/>
            <person name="Rezaul K."/>
            <person name="Wu L."/>
            <person name="Eng J.K."/>
            <person name="Rodionov V."/>
            <person name="Han D.K."/>
        </authorList>
    </citation>
    <scope>PHOSPHORYLATION [LARGE SCALE ANALYSIS] AT SER-102; THR-144; TYR-148; SER-182 AND TYR-188</scope>
    <scope>IDENTIFICATION BY MASS SPECTROMETRY [LARGE SCALE ANALYSIS]</scope>
    <source>
        <tissue>Leukemic T-cell</tissue>
    </source>
</reference>